<feature type="chain" id="PRO_0000330388" description="HssA/B-like protein 18">
    <location>
        <begin position="1"/>
        <end position="87"/>
    </location>
</feature>
<proteinExistence type="inferred from homology"/>
<sequence length="87" mass="8183">MTILASISSIGNVKSISKSNNVSLSNSSSSLQSMNSIQCGGCGNGGLLGAVGGLVGGVLTGTGVIVGSVLHGVGSILTGGSNNCGCN</sequence>
<name>HSL18_DICDI</name>
<protein>
    <recommendedName>
        <fullName>HssA/B-like protein 18</fullName>
    </recommendedName>
</protein>
<keyword id="KW-1185">Reference proteome</keyword>
<dbReference type="EMBL" id="AAFI02000008">
    <property type="protein sequence ID" value="EAL71148.1"/>
    <property type="molecule type" value="Genomic_DNA"/>
</dbReference>
<dbReference type="RefSeq" id="XP_645001.1">
    <property type="nucleotide sequence ID" value="XM_639909.1"/>
</dbReference>
<dbReference type="PaxDb" id="44689-DDB0233579"/>
<dbReference type="EnsemblProtists" id="EAL71148">
    <property type="protein sequence ID" value="EAL71148"/>
    <property type="gene ID" value="DDB_G0273021"/>
</dbReference>
<dbReference type="GeneID" id="8618678"/>
<dbReference type="KEGG" id="ddi:DDB_G0273021"/>
<dbReference type="dictyBase" id="DDB_G0273021">
    <property type="gene designation" value="sigN5"/>
</dbReference>
<dbReference type="HOGENOM" id="CLU_190274_0_0_1"/>
<dbReference type="InParanoid" id="Q7KWN4"/>
<dbReference type="PRO" id="PR:Q7KWN4"/>
<dbReference type="Proteomes" id="UP000002195">
    <property type="component" value="Chromosome 2"/>
</dbReference>
<dbReference type="InterPro" id="IPR008455">
    <property type="entry name" value="HssA/B-related"/>
</dbReference>
<dbReference type="PANTHER" id="PTHR31857">
    <property type="entry name" value="HSSA/B-LIKE PROTEIN 17-RELATED"/>
    <property type="match status" value="1"/>
</dbReference>
<dbReference type="PANTHER" id="PTHR31857:SF2">
    <property type="entry name" value="HSSA_B-LIKE PROTEIN 17-RELATED"/>
    <property type="match status" value="1"/>
</dbReference>
<dbReference type="Pfam" id="PF05710">
    <property type="entry name" value="Coiled"/>
    <property type="match status" value="1"/>
</dbReference>
<comment type="similarity">
    <text evidence="1">Belongs to the hssA/B family.</text>
</comment>
<organism>
    <name type="scientific">Dictyostelium discoideum</name>
    <name type="common">Social amoeba</name>
    <dbReference type="NCBI Taxonomy" id="44689"/>
    <lineage>
        <taxon>Eukaryota</taxon>
        <taxon>Amoebozoa</taxon>
        <taxon>Evosea</taxon>
        <taxon>Eumycetozoa</taxon>
        <taxon>Dictyostelia</taxon>
        <taxon>Dictyosteliales</taxon>
        <taxon>Dictyosteliaceae</taxon>
        <taxon>Dictyostelium</taxon>
    </lineage>
</organism>
<gene>
    <name type="primary">hssl18</name>
    <name type="ORF">DDB_G0273021</name>
</gene>
<accession>Q7KWN4</accession>
<accession>Q558R5</accession>
<reference key="1">
    <citation type="journal article" date="2002" name="Nature">
        <title>Sequence and analysis of chromosome 2 of Dictyostelium discoideum.</title>
        <authorList>
            <person name="Gloeckner G."/>
            <person name="Eichinger L."/>
            <person name="Szafranski K."/>
            <person name="Pachebat J.A."/>
            <person name="Bankier A.T."/>
            <person name="Dear P.H."/>
            <person name="Lehmann R."/>
            <person name="Baumgart C."/>
            <person name="Parra G."/>
            <person name="Abril J.F."/>
            <person name="Guigo R."/>
            <person name="Kumpf K."/>
            <person name="Tunggal B."/>
            <person name="Cox E.C."/>
            <person name="Quail M.A."/>
            <person name="Platzer M."/>
            <person name="Rosenthal A."/>
            <person name="Noegel A.A."/>
        </authorList>
    </citation>
    <scope>NUCLEOTIDE SEQUENCE [LARGE SCALE GENOMIC DNA]</scope>
    <source>
        <strain>AX4</strain>
    </source>
</reference>
<reference key="2">
    <citation type="journal article" date="2005" name="Nature">
        <title>The genome of the social amoeba Dictyostelium discoideum.</title>
        <authorList>
            <person name="Eichinger L."/>
            <person name="Pachebat J.A."/>
            <person name="Gloeckner G."/>
            <person name="Rajandream M.A."/>
            <person name="Sucgang R."/>
            <person name="Berriman M."/>
            <person name="Song J."/>
            <person name="Olsen R."/>
            <person name="Szafranski K."/>
            <person name="Xu Q."/>
            <person name="Tunggal B."/>
            <person name="Kummerfeld S."/>
            <person name="Madera M."/>
            <person name="Konfortov B.A."/>
            <person name="Rivero F."/>
            <person name="Bankier A.T."/>
            <person name="Lehmann R."/>
            <person name="Hamlin N."/>
            <person name="Davies R."/>
            <person name="Gaudet P."/>
            <person name="Fey P."/>
            <person name="Pilcher K."/>
            <person name="Chen G."/>
            <person name="Saunders D."/>
            <person name="Sodergren E.J."/>
            <person name="Davis P."/>
            <person name="Kerhornou A."/>
            <person name="Nie X."/>
            <person name="Hall N."/>
            <person name="Anjard C."/>
            <person name="Hemphill L."/>
            <person name="Bason N."/>
            <person name="Farbrother P."/>
            <person name="Desany B."/>
            <person name="Just E."/>
            <person name="Morio T."/>
            <person name="Rost R."/>
            <person name="Churcher C.M."/>
            <person name="Cooper J."/>
            <person name="Haydock S."/>
            <person name="van Driessche N."/>
            <person name="Cronin A."/>
            <person name="Goodhead I."/>
            <person name="Muzny D.M."/>
            <person name="Mourier T."/>
            <person name="Pain A."/>
            <person name="Lu M."/>
            <person name="Harper D."/>
            <person name="Lindsay R."/>
            <person name="Hauser H."/>
            <person name="James K.D."/>
            <person name="Quiles M."/>
            <person name="Madan Babu M."/>
            <person name="Saito T."/>
            <person name="Buchrieser C."/>
            <person name="Wardroper A."/>
            <person name="Felder M."/>
            <person name="Thangavelu M."/>
            <person name="Johnson D."/>
            <person name="Knights A."/>
            <person name="Loulseged H."/>
            <person name="Mungall K.L."/>
            <person name="Oliver K."/>
            <person name="Price C."/>
            <person name="Quail M.A."/>
            <person name="Urushihara H."/>
            <person name="Hernandez J."/>
            <person name="Rabbinowitsch E."/>
            <person name="Steffen D."/>
            <person name="Sanders M."/>
            <person name="Ma J."/>
            <person name="Kohara Y."/>
            <person name="Sharp S."/>
            <person name="Simmonds M.N."/>
            <person name="Spiegler S."/>
            <person name="Tivey A."/>
            <person name="Sugano S."/>
            <person name="White B."/>
            <person name="Walker D."/>
            <person name="Woodward J.R."/>
            <person name="Winckler T."/>
            <person name="Tanaka Y."/>
            <person name="Shaulsky G."/>
            <person name="Schleicher M."/>
            <person name="Weinstock G.M."/>
            <person name="Rosenthal A."/>
            <person name="Cox E.C."/>
            <person name="Chisholm R.L."/>
            <person name="Gibbs R.A."/>
            <person name="Loomis W.F."/>
            <person name="Platzer M."/>
            <person name="Kay R.R."/>
            <person name="Williams J.G."/>
            <person name="Dear P.H."/>
            <person name="Noegel A.A."/>
            <person name="Barrell B.G."/>
            <person name="Kuspa A."/>
        </authorList>
    </citation>
    <scope>NUCLEOTIDE SEQUENCE [LARGE SCALE GENOMIC DNA]</scope>
    <source>
        <strain>AX4</strain>
    </source>
</reference>
<evidence type="ECO:0000305" key="1"/>